<gene>
    <name type="primary">ERF020</name>
    <name type="ordered locus">At1g71520</name>
    <name type="ORF">F26A9.11</name>
</gene>
<organism>
    <name type="scientific">Arabidopsis thaliana</name>
    <name type="common">Mouse-ear cress</name>
    <dbReference type="NCBI Taxonomy" id="3702"/>
    <lineage>
        <taxon>Eukaryota</taxon>
        <taxon>Viridiplantae</taxon>
        <taxon>Streptophyta</taxon>
        <taxon>Embryophyta</taxon>
        <taxon>Tracheophyta</taxon>
        <taxon>Spermatophyta</taxon>
        <taxon>Magnoliopsida</taxon>
        <taxon>eudicotyledons</taxon>
        <taxon>Gunneridae</taxon>
        <taxon>Pentapetalae</taxon>
        <taxon>rosids</taxon>
        <taxon>malvids</taxon>
        <taxon>Brassicales</taxon>
        <taxon>Brassicaceae</taxon>
        <taxon>Camelineae</taxon>
        <taxon>Arabidopsis</taxon>
    </lineage>
</organism>
<comment type="function">
    <text evidence="1">Probably acts as a transcriptional activator. Binds to the GCC-box pathogenesis-related promoter element. May be involved in the regulation of gene expression by stress factors and by components of stress signal transduction pathways (By similarity).</text>
</comment>
<comment type="subcellular location">
    <subcellularLocation>
        <location evidence="3">Nucleus</location>
    </subcellularLocation>
</comment>
<comment type="similarity">
    <text evidence="3">Belongs to the AP2/ERF transcription factor family. ERF subfamily.</text>
</comment>
<feature type="chain" id="PRO_0000290380" description="Ethylene-responsive transcription factor ERF020">
    <location>
        <begin position="1"/>
        <end position="143"/>
    </location>
</feature>
<feature type="DNA-binding region" description="AP2/ERF" evidence="2">
    <location>
        <begin position="13"/>
        <end position="74"/>
    </location>
</feature>
<keyword id="KW-0010">Activator</keyword>
<keyword id="KW-0238">DNA-binding</keyword>
<keyword id="KW-0936">Ethylene signaling pathway</keyword>
<keyword id="KW-0539">Nucleus</keyword>
<keyword id="KW-1185">Reference proteome</keyword>
<keyword id="KW-0804">Transcription</keyword>
<keyword id="KW-0805">Transcription regulation</keyword>
<dbReference type="EMBL" id="AC016163">
    <property type="protein sequence ID" value="AAG51829.1"/>
    <property type="molecule type" value="Genomic_DNA"/>
</dbReference>
<dbReference type="EMBL" id="CP002684">
    <property type="protein sequence ID" value="AEE35209.1"/>
    <property type="molecule type" value="Genomic_DNA"/>
</dbReference>
<dbReference type="EMBL" id="BT010999">
    <property type="protein sequence ID" value="AAR25635.1"/>
    <property type="molecule type" value="mRNA"/>
</dbReference>
<dbReference type="EMBL" id="BT014816">
    <property type="protein sequence ID" value="AAT41799.1"/>
    <property type="molecule type" value="mRNA"/>
</dbReference>
<dbReference type="RefSeq" id="NP_177307.1">
    <property type="nucleotide sequence ID" value="NM_105820.4"/>
</dbReference>
<dbReference type="SMR" id="Q9C9I8"/>
<dbReference type="BioGRID" id="28712">
    <property type="interactions" value="1"/>
</dbReference>
<dbReference type="FunCoup" id="Q9C9I8">
    <property type="interactions" value="29"/>
</dbReference>
<dbReference type="STRING" id="3702.Q9C9I8"/>
<dbReference type="PaxDb" id="3702-AT1G71520.1"/>
<dbReference type="EnsemblPlants" id="AT1G71520.1">
    <property type="protein sequence ID" value="AT1G71520.1"/>
    <property type="gene ID" value="AT1G71520"/>
</dbReference>
<dbReference type="GeneID" id="843492"/>
<dbReference type="Gramene" id="AT1G71520.1">
    <property type="protein sequence ID" value="AT1G71520.1"/>
    <property type="gene ID" value="AT1G71520"/>
</dbReference>
<dbReference type="KEGG" id="ath:AT1G71520"/>
<dbReference type="Araport" id="AT1G71520"/>
<dbReference type="TAIR" id="AT1G71520"/>
<dbReference type="eggNOG" id="ENOG502S3U7">
    <property type="taxonomic scope" value="Eukaryota"/>
</dbReference>
<dbReference type="HOGENOM" id="CLU_063331_7_4_1"/>
<dbReference type="InParanoid" id="Q9C9I8"/>
<dbReference type="OMA" id="THERLWL"/>
<dbReference type="OrthoDB" id="1849108at2759"/>
<dbReference type="PhylomeDB" id="Q9C9I8"/>
<dbReference type="PRO" id="PR:Q9C9I8"/>
<dbReference type="Proteomes" id="UP000006548">
    <property type="component" value="Chromosome 1"/>
</dbReference>
<dbReference type="ExpressionAtlas" id="Q9C9I8">
    <property type="expression patterns" value="baseline and differential"/>
</dbReference>
<dbReference type="GO" id="GO:0005634">
    <property type="term" value="C:nucleus"/>
    <property type="evidence" value="ECO:0007669"/>
    <property type="project" value="UniProtKB-SubCell"/>
</dbReference>
<dbReference type="GO" id="GO:0003677">
    <property type="term" value="F:DNA binding"/>
    <property type="evidence" value="ECO:0007669"/>
    <property type="project" value="UniProtKB-KW"/>
</dbReference>
<dbReference type="GO" id="GO:0003700">
    <property type="term" value="F:DNA-binding transcription factor activity"/>
    <property type="evidence" value="ECO:0000250"/>
    <property type="project" value="TAIR"/>
</dbReference>
<dbReference type="GO" id="GO:0009873">
    <property type="term" value="P:ethylene-activated signaling pathway"/>
    <property type="evidence" value="ECO:0007669"/>
    <property type="project" value="UniProtKB-KW"/>
</dbReference>
<dbReference type="CDD" id="cd00018">
    <property type="entry name" value="AP2"/>
    <property type="match status" value="1"/>
</dbReference>
<dbReference type="FunFam" id="3.30.730.10:FF:000006">
    <property type="entry name" value="ethylene-responsive transcription factor ERF014-like"/>
    <property type="match status" value="1"/>
</dbReference>
<dbReference type="Gene3D" id="3.30.730.10">
    <property type="entry name" value="AP2/ERF domain"/>
    <property type="match status" value="1"/>
</dbReference>
<dbReference type="InterPro" id="IPR001471">
    <property type="entry name" value="AP2/ERF_dom"/>
</dbReference>
<dbReference type="InterPro" id="IPR036955">
    <property type="entry name" value="AP2/ERF_dom_sf"/>
</dbReference>
<dbReference type="InterPro" id="IPR051032">
    <property type="entry name" value="AP2/ERF_TF_ERF_subfamily"/>
</dbReference>
<dbReference type="InterPro" id="IPR016177">
    <property type="entry name" value="DNA-bd_dom_sf"/>
</dbReference>
<dbReference type="PANTHER" id="PTHR31985:SF45">
    <property type="entry name" value="ETHYLENE-RESPONSIVE TRANSCRIPTION FACTOR ERF020"/>
    <property type="match status" value="1"/>
</dbReference>
<dbReference type="PANTHER" id="PTHR31985">
    <property type="entry name" value="ETHYLENE-RESPONSIVE TRANSCRIPTION FACTOR ERF042-RELATED"/>
    <property type="match status" value="1"/>
</dbReference>
<dbReference type="Pfam" id="PF00847">
    <property type="entry name" value="AP2"/>
    <property type="match status" value="1"/>
</dbReference>
<dbReference type="PRINTS" id="PR00367">
    <property type="entry name" value="ETHRSPELEMNT"/>
</dbReference>
<dbReference type="SMART" id="SM00380">
    <property type="entry name" value="AP2"/>
    <property type="match status" value="1"/>
</dbReference>
<dbReference type="SUPFAM" id="SSF54171">
    <property type="entry name" value="DNA-binding domain"/>
    <property type="match status" value="1"/>
</dbReference>
<dbReference type="PROSITE" id="PS51032">
    <property type="entry name" value="AP2_ERF"/>
    <property type="match status" value="1"/>
</dbReference>
<proteinExistence type="evidence at transcript level"/>
<protein>
    <recommendedName>
        <fullName>Ethylene-responsive transcription factor ERF020</fullName>
    </recommendedName>
</protein>
<accession>Q9C9I8</accession>
<name>ERF20_ARATH</name>
<sequence length="143" mass="15695">MDSRDTGETDQSKYKGIRRRKWGKWVSEIRVPGTRQRLWLGSFSTAEGAAVAHDVAFYCLHRPSSLDDESFNFPHLLTTSLASNISPKSIQKAASDAGMAVDAGFHGAVSGSGGCEERSSMANMEEEDKLSISVYDYLEDDLV</sequence>
<evidence type="ECO:0000250" key="1"/>
<evidence type="ECO:0000255" key="2">
    <source>
        <dbReference type="PROSITE-ProRule" id="PRU00366"/>
    </source>
</evidence>
<evidence type="ECO:0000305" key="3"/>
<reference key="1">
    <citation type="journal article" date="2000" name="Nature">
        <title>Sequence and analysis of chromosome 1 of the plant Arabidopsis thaliana.</title>
        <authorList>
            <person name="Theologis A."/>
            <person name="Ecker J.R."/>
            <person name="Palm C.J."/>
            <person name="Federspiel N.A."/>
            <person name="Kaul S."/>
            <person name="White O."/>
            <person name="Alonso J."/>
            <person name="Altafi H."/>
            <person name="Araujo R."/>
            <person name="Bowman C.L."/>
            <person name="Brooks S.Y."/>
            <person name="Buehler E."/>
            <person name="Chan A."/>
            <person name="Chao Q."/>
            <person name="Chen H."/>
            <person name="Cheuk R.F."/>
            <person name="Chin C.W."/>
            <person name="Chung M.K."/>
            <person name="Conn L."/>
            <person name="Conway A.B."/>
            <person name="Conway A.R."/>
            <person name="Creasy T.H."/>
            <person name="Dewar K."/>
            <person name="Dunn P."/>
            <person name="Etgu P."/>
            <person name="Feldblyum T.V."/>
            <person name="Feng J.-D."/>
            <person name="Fong B."/>
            <person name="Fujii C.Y."/>
            <person name="Gill J.E."/>
            <person name="Goldsmith A.D."/>
            <person name="Haas B."/>
            <person name="Hansen N.F."/>
            <person name="Hughes B."/>
            <person name="Huizar L."/>
            <person name="Hunter J.L."/>
            <person name="Jenkins J."/>
            <person name="Johnson-Hopson C."/>
            <person name="Khan S."/>
            <person name="Khaykin E."/>
            <person name="Kim C.J."/>
            <person name="Koo H.L."/>
            <person name="Kremenetskaia I."/>
            <person name="Kurtz D.B."/>
            <person name="Kwan A."/>
            <person name="Lam B."/>
            <person name="Langin-Hooper S."/>
            <person name="Lee A."/>
            <person name="Lee J.M."/>
            <person name="Lenz C.A."/>
            <person name="Li J.H."/>
            <person name="Li Y.-P."/>
            <person name="Lin X."/>
            <person name="Liu S.X."/>
            <person name="Liu Z.A."/>
            <person name="Luros J.S."/>
            <person name="Maiti R."/>
            <person name="Marziali A."/>
            <person name="Militscher J."/>
            <person name="Miranda M."/>
            <person name="Nguyen M."/>
            <person name="Nierman W.C."/>
            <person name="Osborne B.I."/>
            <person name="Pai G."/>
            <person name="Peterson J."/>
            <person name="Pham P.K."/>
            <person name="Rizzo M."/>
            <person name="Rooney T."/>
            <person name="Rowley D."/>
            <person name="Sakano H."/>
            <person name="Salzberg S.L."/>
            <person name="Schwartz J.R."/>
            <person name="Shinn P."/>
            <person name="Southwick A.M."/>
            <person name="Sun H."/>
            <person name="Tallon L.J."/>
            <person name="Tambunga G."/>
            <person name="Toriumi M.J."/>
            <person name="Town C.D."/>
            <person name="Utterback T."/>
            <person name="Van Aken S."/>
            <person name="Vaysberg M."/>
            <person name="Vysotskaia V.S."/>
            <person name="Walker M."/>
            <person name="Wu D."/>
            <person name="Yu G."/>
            <person name="Fraser C.M."/>
            <person name="Venter J.C."/>
            <person name="Davis R.W."/>
        </authorList>
    </citation>
    <scope>NUCLEOTIDE SEQUENCE [LARGE SCALE GENOMIC DNA]</scope>
    <source>
        <strain>cv. Columbia</strain>
    </source>
</reference>
<reference key="2">
    <citation type="journal article" date="2017" name="Plant J.">
        <title>Araport11: a complete reannotation of the Arabidopsis thaliana reference genome.</title>
        <authorList>
            <person name="Cheng C.Y."/>
            <person name="Krishnakumar V."/>
            <person name="Chan A.P."/>
            <person name="Thibaud-Nissen F."/>
            <person name="Schobel S."/>
            <person name="Town C.D."/>
        </authorList>
    </citation>
    <scope>GENOME REANNOTATION</scope>
    <source>
        <strain>cv. Columbia</strain>
    </source>
</reference>
<reference key="3">
    <citation type="submission" date="2004-06" db="EMBL/GenBank/DDBJ databases">
        <authorList>
            <person name="Cheuk R.F."/>
            <person name="Chen H."/>
            <person name="Kim C.J."/>
            <person name="Shinn P."/>
            <person name="Ecker J.R."/>
        </authorList>
    </citation>
    <scope>NUCLEOTIDE SEQUENCE [LARGE SCALE MRNA]</scope>
    <source>
        <strain>cv. Columbia</strain>
    </source>
</reference>
<reference key="4">
    <citation type="journal article" date="2006" name="Plant Physiol.">
        <title>Genome-wide analysis of the ERF gene family in Arabidopsis and rice.</title>
        <authorList>
            <person name="Nakano T."/>
            <person name="Suzuki K."/>
            <person name="Fujimura T."/>
            <person name="Shinshi H."/>
        </authorList>
    </citation>
    <scope>GENE FAMILY</scope>
    <scope>NOMENCLATURE</scope>
</reference>